<proteinExistence type="inferred from homology"/>
<gene>
    <name evidence="1" type="primary">rplI</name>
    <name type="ordered locus">BCQ_5319</name>
</gene>
<dbReference type="EMBL" id="CP000227">
    <property type="protein sequence ID" value="ACM15715.1"/>
    <property type="molecule type" value="Genomic_DNA"/>
</dbReference>
<dbReference type="SMR" id="B9IT27"/>
<dbReference type="KEGG" id="bcq:BCQ_5319"/>
<dbReference type="HOGENOM" id="CLU_078938_3_2_9"/>
<dbReference type="Proteomes" id="UP000000441">
    <property type="component" value="Chromosome"/>
</dbReference>
<dbReference type="GO" id="GO:1990904">
    <property type="term" value="C:ribonucleoprotein complex"/>
    <property type="evidence" value="ECO:0007669"/>
    <property type="project" value="UniProtKB-KW"/>
</dbReference>
<dbReference type="GO" id="GO:0005840">
    <property type="term" value="C:ribosome"/>
    <property type="evidence" value="ECO:0007669"/>
    <property type="project" value="UniProtKB-KW"/>
</dbReference>
<dbReference type="GO" id="GO:0019843">
    <property type="term" value="F:rRNA binding"/>
    <property type="evidence" value="ECO:0007669"/>
    <property type="project" value="UniProtKB-UniRule"/>
</dbReference>
<dbReference type="GO" id="GO:0003735">
    <property type="term" value="F:structural constituent of ribosome"/>
    <property type="evidence" value="ECO:0007669"/>
    <property type="project" value="InterPro"/>
</dbReference>
<dbReference type="GO" id="GO:0006412">
    <property type="term" value="P:translation"/>
    <property type="evidence" value="ECO:0007669"/>
    <property type="project" value="UniProtKB-UniRule"/>
</dbReference>
<dbReference type="FunFam" id="3.10.430.100:FF:000002">
    <property type="entry name" value="50S ribosomal protein L9"/>
    <property type="match status" value="1"/>
</dbReference>
<dbReference type="FunFam" id="3.40.5.10:FF:000002">
    <property type="entry name" value="50S ribosomal protein L9"/>
    <property type="match status" value="1"/>
</dbReference>
<dbReference type="Gene3D" id="3.10.430.100">
    <property type="entry name" value="Ribosomal protein L9, C-terminal domain"/>
    <property type="match status" value="1"/>
</dbReference>
<dbReference type="Gene3D" id="3.40.5.10">
    <property type="entry name" value="Ribosomal protein L9, N-terminal domain"/>
    <property type="match status" value="1"/>
</dbReference>
<dbReference type="HAMAP" id="MF_00503">
    <property type="entry name" value="Ribosomal_bL9"/>
    <property type="match status" value="1"/>
</dbReference>
<dbReference type="InterPro" id="IPR000244">
    <property type="entry name" value="Ribosomal_bL9"/>
</dbReference>
<dbReference type="InterPro" id="IPR009027">
    <property type="entry name" value="Ribosomal_bL9/RNase_H1_N"/>
</dbReference>
<dbReference type="InterPro" id="IPR020594">
    <property type="entry name" value="Ribosomal_bL9_bac/chp"/>
</dbReference>
<dbReference type="InterPro" id="IPR020069">
    <property type="entry name" value="Ribosomal_bL9_C"/>
</dbReference>
<dbReference type="InterPro" id="IPR036791">
    <property type="entry name" value="Ribosomal_bL9_C_sf"/>
</dbReference>
<dbReference type="InterPro" id="IPR020070">
    <property type="entry name" value="Ribosomal_bL9_N"/>
</dbReference>
<dbReference type="InterPro" id="IPR036935">
    <property type="entry name" value="Ribosomal_bL9_N_sf"/>
</dbReference>
<dbReference type="NCBIfam" id="TIGR00158">
    <property type="entry name" value="L9"/>
    <property type="match status" value="1"/>
</dbReference>
<dbReference type="PANTHER" id="PTHR21368">
    <property type="entry name" value="50S RIBOSOMAL PROTEIN L9"/>
    <property type="match status" value="1"/>
</dbReference>
<dbReference type="Pfam" id="PF03948">
    <property type="entry name" value="Ribosomal_L9_C"/>
    <property type="match status" value="1"/>
</dbReference>
<dbReference type="Pfam" id="PF01281">
    <property type="entry name" value="Ribosomal_L9_N"/>
    <property type="match status" value="1"/>
</dbReference>
<dbReference type="SUPFAM" id="SSF55658">
    <property type="entry name" value="L9 N-domain-like"/>
    <property type="match status" value="1"/>
</dbReference>
<dbReference type="SUPFAM" id="SSF55653">
    <property type="entry name" value="Ribosomal protein L9 C-domain"/>
    <property type="match status" value="1"/>
</dbReference>
<dbReference type="PROSITE" id="PS00651">
    <property type="entry name" value="RIBOSOMAL_L9"/>
    <property type="match status" value="1"/>
</dbReference>
<organism>
    <name type="scientific">Bacillus cereus (strain Q1)</name>
    <dbReference type="NCBI Taxonomy" id="361100"/>
    <lineage>
        <taxon>Bacteria</taxon>
        <taxon>Bacillati</taxon>
        <taxon>Bacillota</taxon>
        <taxon>Bacilli</taxon>
        <taxon>Bacillales</taxon>
        <taxon>Bacillaceae</taxon>
        <taxon>Bacillus</taxon>
        <taxon>Bacillus cereus group</taxon>
    </lineage>
</organism>
<comment type="function">
    <text evidence="1">Binds to the 23S rRNA.</text>
</comment>
<comment type="similarity">
    <text evidence="1">Belongs to the bacterial ribosomal protein bL9 family.</text>
</comment>
<reference key="1">
    <citation type="journal article" date="2009" name="J. Bacteriol.">
        <title>Complete genome sequence of the extremophilic Bacillus cereus strain Q1 with industrial applications.</title>
        <authorList>
            <person name="Xiong Z."/>
            <person name="Jiang Y."/>
            <person name="Qi D."/>
            <person name="Lu H."/>
            <person name="Yang F."/>
            <person name="Yang J."/>
            <person name="Chen L."/>
            <person name="Sun L."/>
            <person name="Xu X."/>
            <person name="Xue Y."/>
            <person name="Zhu Y."/>
            <person name="Jin Q."/>
        </authorList>
    </citation>
    <scope>NUCLEOTIDE SEQUENCE [LARGE SCALE GENOMIC DNA]</scope>
    <source>
        <strain>Q1</strain>
    </source>
</reference>
<protein>
    <recommendedName>
        <fullName evidence="1">Large ribosomal subunit protein bL9</fullName>
    </recommendedName>
    <alternativeName>
        <fullName evidence="2">50S ribosomal protein L9</fullName>
    </alternativeName>
</protein>
<evidence type="ECO:0000255" key="1">
    <source>
        <dbReference type="HAMAP-Rule" id="MF_00503"/>
    </source>
</evidence>
<evidence type="ECO:0000305" key="2"/>
<name>RL9_BACCQ</name>
<sequence>MKVIFLKDVKGKGKKGEVKNVPDGYANNFLLKQGLAAEATNSSMKTLEAQKRKEEKDAAAELENAKQLKETLEKLTVELKAKSGEGGRLFGSITSKQIVDAMQKSHNIKLDKRKFEMDDAIRALGYTNVTVKLHPQVTATVKVHVSEQ</sequence>
<accession>B9IT27</accession>
<feature type="chain" id="PRO_1000196224" description="Large ribosomal subunit protein bL9">
    <location>
        <begin position="1"/>
        <end position="148"/>
    </location>
</feature>
<keyword id="KW-0687">Ribonucleoprotein</keyword>
<keyword id="KW-0689">Ribosomal protein</keyword>
<keyword id="KW-0694">RNA-binding</keyword>
<keyword id="KW-0699">rRNA-binding</keyword>